<evidence type="ECO:0000250" key="1">
    <source>
        <dbReference type="UniProtKB" id="Q5M871"/>
    </source>
</evidence>
<evidence type="ECO:0000255" key="2"/>
<evidence type="ECO:0000256" key="3">
    <source>
        <dbReference type="SAM" id="MobiDB-lite"/>
    </source>
</evidence>
<evidence type="ECO:0000269" key="4">
    <source>
    </source>
</evidence>
<evidence type="ECO:0000269" key="5">
    <source>
    </source>
</evidence>
<evidence type="ECO:0000269" key="6">
    <source>
    </source>
</evidence>
<evidence type="ECO:0000269" key="7">
    <source>
    </source>
</evidence>
<evidence type="ECO:0000269" key="8">
    <source>
    </source>
</evidence>
<evidence type="ECO:0000269" key="9">
    <source>
    </source>
</evidence>
<evidence type="ECO:0000269" key="10">
    <source>
    </source>
</evidence>
<evidence type="ECO:0000269" key="11">
    <source>
    </source>
</evidence>
<evidence type="ECO:0000269" key="12">
    <source>
    </source>
</evidence>
<evidence type="ECO:0000269" key="13">
    <source>
    </source>
</evidence>
<evidence type="ECO:0000303" key="14">
    <source>
    </source>
</evidence>
<evidence type="ECO:0000303" key="15">
    <source>
    </source>
</evidence>
<evidence type="ECO:0000303" key="16">
    <source>
    </source>
</evidence>
<evidence type="ECO:0000303" key="17">
    <source>
    </source>
</evidence>
<evidence type="ECO:0000305" key="18"/>
<evidence type="ECO:0000312" key="19">
    <source>
        <dbReference type="HGNC" id="HGNC:14315"/>
    </source>
</evidence>
<evidence type="ECO:0007744" key="20">
    <source>
        <dbReference type="PDB" id="7YTD"/>
    </source>
</evidence>
<evidence type="ECO:0007744" key="21">
    <source>
        <dbReference type="PDB" id="8BPE"/>
    </source>
</evidence>
<evidence type="ECO:0007829" key="22">
    <source>
        <dbReference type="PDB" id="7YTE"/>
    </source>
</evidence>
<accession>O60667</accession>
<accession>A8K7J2</accession>
<accession>B7Z6Z0</accession>
<accession>D9MWM3</accession>
<proteinExistence type="evidence at protein level"/>
<name>FCMR_HUMAN</name>
<gene>
    <name evidence="16 19" type="primary">FCMR</name>
    <name evidence="16" type="synonym">FAIM3</name>
    <name evidence="16" type="synonym">TOSO</name>
</gene>
<dbReference type="EMBL" id="AF057557">
    <property type="protein sequence ID" value="AAC18830.1"/>
    <property type="molecule type" value="mRNA"/>
</dbReference>
<dbReference type="EMBL" id="HM480394">
    <property type="protein sequence ID" value="ADK11426.1"/>
    <property type="molecule type" value="mRNA"/>
</dbReference>
<dbReference type="EMBL" id="BT006797">
    <property type="protein sequence ID" value="AAP35443.1"/>
    <property type="molecule type" value="mRNA"/>
</dbReference>
<dbReference type="EMBL" id="AK292007">
    <property type="protein sequence ID" value="BAF84696.1"/>
    <property type="molecule type" value="mRNA"/>
</dbReference>
<dbReference type="EMBL" id="AK301187">
    <property type="protein sequence ID" value="BAH13426.1"/>
    <property type="molecule type" value="mRNA"/>
</dbReference>
<dbReference type="EMBL" id="AK316336">
    <property type="protein sequence ID" value="BAH14707.1"/>
    <property type="molecule type" value="mRNA"/>
</dbReference>
<dbReference type="EMBL" id="AC098935">
    <property type="status" value="NOT_ANNOTATED_CDS"/>
    <property type="molecule type" value="Genomic_DNA"/>
</dbReference>
<dbReference type="EMBL" id="CH471100">
    <property type="protein sequence ID" value="EAW93517.1"/>
    <property type="molecule type" value="Genomic_DNA"/>
</dbReference>
<dbReference type="EMBL" id="BC006401">
    <property type="protein sequence ID" value="AAH06401.1"/>
    <property type="molecule type" value="mRNA"/>
</dbReference>
<dbReference type="CCDS" id="CCDS1473.1">
    <molecule id="O60667-1"/>
</dbReference>
<dbReference type="CCDS" id="CCDS44304.1">
    <molecule id="O60667-2"/>
</dbReference>
<dbReference type="CCDS" id="CCDS53467.1">
    <molecule id="O60667-3"/>
</dbReference>
<dbReference type="RefSeq" id="NP_001135945.1">
    <molecule id="O60667-2"/>
    <property type="nucleotide sequence ID" value="NM_001142473.2"/>
</dbReference>
<dbReference type="RefSeq" id="NP_001180267.1">
    <molecule id="O60667-3"/>
    <property type="nucleotide sequence ID" value="NM_001193338.2"/>
</dbReference>
<dbReference type="RefSeq" id="NP_001392800.1">
    <molecule id="O60667-1"/>
    <property type="nucleotide sequence ID" value="NM_001405871.1"/>
</dbReference>
<dbReference type="RefSeq" id="NP_001392816.1">
    <molecule id="O60667-2"/>
    <property type="nucleotide sequence ID" value="NM_001405887.1"/>
</dbReference>
<dbReference type="RefSeq" id="NP_005440.1">
    <molecule id="O60667-1"/>
    <property type="nucleotide sequence ID" value="NM_005449.5"/>
</dbReference>
<dbReference type="PDB" id="7YSG">
    <property type="method" value="EM"/>
    <property type="resolution" value="3.18 A"/>
    <property type="chains" value="R/S/U/V=18-124"/>
</dbReference>
<dbReference type="PDB" id="7YTC">
    <property type="method" value="EM"/>
    <property type="resolution" value="3.39 A"/>
    <property type="chains" value="R=18-124"/>
</dbReference>
<dbReference type="PDB" id="7YTD">
    <property type="method" value="EM"/>
    <property type="resolution" value="3.71 A"/>
    <property type="chains" value="R/S/U/V=18-124"/>
</dbReference>
<dbReference type="PDB" id="7YTE">
    <property type="method" value="X-ray"/>
    <property type="resolution" value="3.00 A"/>
    <property type="chains" value="C/D=18-124"/>
</dbReference>
<dbReference type="PDB" id="8BPE">
    <property type="method" value="EM"/>
    <property type="resolution" value="3.63 A"/>
    <property type="chains" value="I/M/N/O/P/Q/R/S=18-251"/>
</dbReference>
<dbReference type="PDB" id="8BPF">
    <property type="method" value="EM"/>
    <property type="resolution" value="3.50 A"/>
    <property type="chains" value="I=18-251"/>
</dbReference>
<dbReference type="PDB" id="8BPG">
    <property type="method" value="EM"/>
    <property type="resolution" value="3.10 A"/>
    <property type="chains" value="A/B=18-251"/>
</dbReference>
<dbReference type="PDBsum" id="7YSG"/>
<dbReference type="PDBsum" id="7YTC"/>
<dbReference type="PDBsum" id="7YTD"/>
<dbReference type="PDBsum" id="7YTE"/>
<dbReference type="PDBsum" id="8BPE"/>
<dbReference type="PDBsum" id="8BPF"/>
<dbReference type="PDBsum" id="8BPG"/>
<dbReference type="EMDB" id="EMD-16150"/>
<dbReference type="EMDB" id="EMD-16151"/>
<dbReference type="EMDB" id="EMD-16152"/>
<dbReference type="EMDB" id="EMD-34074"/>
<dbReference type="EMDB" id="EMD-34085"/>
<dbReference type="EMDB" id="EMD-34086"/>
<dbReference type="SMR" id="O60667"/>
<dbReference type="BioGRID" id="114648">
    <property type="interactions" value="10"/>
</dbReference>
<dbReference type="FunCoup" id="O60667">
    <property type="interactions" value="668"/>
</dbReference>
<dbReference type="IntAct" id="O60667">
    <property type="interactions" value="4"/>
</dbReference>
<dbReference type="STRING" id="9606.ENSP00000356058"/>
<dbReference type="GlyCosmos" id="O60667">
    <property type="glycosylation" value="1 site, 1 glycan"/>
</dbReference>
<dbReference type="GlyGen" id="O60667">
    <property type="glycosylation" value="2 sites, 2 O-linked glycans (2 sites)"/>
</dbReference>
<dbReference type="iPTMnet" id="O60667"/>
<dbReference type="PhosphoSitePlus" id="O60667"/>
<dbReference type="BioMuta" id="FCMR"/>
<dbReference type="MassIVE" id="O60667"/>
<dbReference type="PaxDb" id="9606-ENSP00000356058"/>
<dbReference type="PeptideAtlas" id="O60667"/>
<dbReference type="ProteomicsDB" id="49511">
    <molecule id="O60667-1"/>
</dbReference>
<dbReference type="ProteomicsDB" id="49512">
    <molecule id="O60667-2"/>
</dbReference>
<dbReference type="Antibodypedia" id="1164">
    <property type="antibodies" value="318 antibodies from 33 providers"/>
</dbReference>
<dbReference type="DNASU" id="9214"/>
<dbReference type="Ensembl" id="ENST00000367091.8">
    <molecule id="O60667-1"/>
    <property type="protein sequence ID" value="ENSP00000356058.3"/>
    <property type="gene ID" value="ENSG00000162894.12"/>
</dbReference>
<dbReference type="Ensembl" id="ENST00000442471.4">
    <molecule id="O60667-2"/>
    <property type="protein sequence ID" value="ENSP00000404136.2"/>
    <property type="gene ID" value="ENSG00000162894.12"/>
</dbReference>
<dbReference type="Ensembl" id="ENST00000628511.2">
    <molecule id="O60667-3"/>
    <property type="protein sequence ID" value="ENSP00000485739.1"/>
    <property type="gene ID" value="ENSG00000162894.12"/>
</dbReference>
<dbReference type="GeneID" id="9214"/>
<dbReference type="KEGG" id="hsa:9214"/>
<dbReference type="MANE-Select" id="ENST00000367091.8">
    <property type="protein sequence ID" value="ENSP00000356058.3"/>
    <property type="RefSeq nucleotide sequence ID" value="NM_005449.5"/>
    <property type="RefSeq protein sequence ID" value="NP_005440.1"/>
</dbReference>
<dbReference type="UCSC" id="uc001hey.4">
    <molecule id="O60667-1"/>
    <property type="organism name" value="human"/>
</dbReference>
<dbReference type="AGR" id="HGNC:14315"/>
<dbReference type="CTD" id="9214"/>
<dbReference type="DisGeNET" id="9214"/>
<dbReference type="GeneCards" id="FCMR"/>
<dbReference type="HGNC" id="HGNC:14315">
    <property type="gene designation" value="FCMR"/>
</dbReference>
<dbReference type="HPA" id="ENSG00000162894">
    <property type="expression patterns" value="Group enriched (intestine, lymphoid tissue)"/>
</dbReference>
<dbReference type="MIM" id="606015">
    <property type="type" value="gene"/>
</dbReference>
<dbReference type="neXtProt" id="NX_O60667"/>
<dbReference type="OpenTargets" id="ENSG00000162894"/>
<dbReference type="PharmGKB" id="PA142671899"/>
<dbReference type="VEuPathDB" id="HostDB:ENSG00000162894"/>
<dbReference type="eggNOG" id="ENOG502S6XH">
    <property type="taxonomic scope" value="Eukaryota"/>
</dbReference>
<dbReference type="GeneTree" id="ENSGT00940000162282"/>
<dbReference type="HOGENOM" id="CLU_059565_0_0_1"/>
<dbReference type="InParanoid" id="O60667"/>
<dbReference type="OMA" id="FYHQPAA"/>
<dbReference type="OrthoDB" id="9805957at2759"/>
<dbReference type="PAN-GO" id="O60667">
    <property type="GO annotations" value="2 GO annotations based on evolutionary models"/>
</dbReference>
<dbReference type="PhylomeDB" id="O60667"/>
<dbReference type="TreeFam" id="TF338713"/>
<dbReference type="PathwayCommons" id="O60667"/>
<dbReference type="SignaLink" id="O60667"/>
<dbReference type="BioGRID-ORCS" id="9214">
    <property type="hits" value="7 hits in 1148 CRISPR screens"/>
</dbReference>
<dbReference type="ChiTaRS" id="FCMR">
    <property type="organism name" value="human"/>
</dbReference>
<dbReference type="GenomeRNAi" id="9214"/>
<dbReference type="Pharos" id="O60667">
    <property type="development level" value="Tbio"/>
</dbReference>
<dbReference type="PRO" id="PR:O60667"/>
<dbReference type="Proteomes" id="UP000005640">
    <property type="component" value="Chromosome 1"/>
</dbReference>
<dbReference type="RNAct" id="O60667">
    <property type="molecule type" value="protein"/>
</dbReference>
<dbReference type="Bgee" id="ENSG00000162894">
    <property type="expression patterns" value="Expressed in spleen and 150 other cell types or tissues"/>
</dbReference>
<dbReference type="ExpressionAtlas" id="O60667">
    <property type="expression patterns" value="baseline and differential"/>
</dbReference>
<dbReference type="GO" id="GO:0005813">
    <property type="term" value="C:centrosome"/>
    <property type="evidence" value="ECO:0000314"/>
    <property type="project" value="HPA"/>
</dbReference>
<dbReference type="GO" id="GO:0031901">
    <property type="term" value="C:early endosome membrane"/>
    <property type="evidence" value="ECO:0000314"/>
    <property type="project" value="UniProtKB"/>
</dbReference>
<dbReference type="GO" id="GO:0005576">
    <property type="term" value="C:extracellular region"/>
    <property type="evidence" value="ECO:0007669"/>
    <property type="project" value="UniProtKB-SubCell"/>
</dbReference>
<dbReference type="GO" id="GO:0005794">
    <property type="term" value="C:Golgi apparatus"/>
    <property type="evidence" value="ECO:0000314"/>
    <property type="project" value="HPA"/>
</dbReference>
<dbReference type="GO" id="GO:0005765">
    <property type="term" value="C:lysosomal membrane"/>
    <property type="evidence" value="ECO:0000314"/>
    <property type="project" value="UniProtKB"/>
</dbReference>
<dbReference type="GO" id="GO:0005654">
    <property type="term" value="C:nucleoplasm"/>
    <property type="evidence" value="ECO:0000314"/>
    <property type="project" value="HPA"/>
</dbReference>
<dbReference type="GO" id="GO:0005886">
    <property type="term" value="C:plasma membrane"/>
    <property type="evidence" value="ECO:0000314"/>
    <property type="project" value="HPA"/>
</dbReference>
<dbReference type="GO" id="GO:0032588">
    <property type="term" value="C:trans-Golgi network membrane"/>
    <property type="evidence" value="ECO:0000314"/>
    <property type="project" value="UniProtKB"/>
</dbReference>
<dbReference type="GO" id="GO:0002172">
    <property type="term" value="F:high-affinity IgM receptor activity"/>
    <property type="evidence" value="ECO:0000314"/>
    <property type="project" value="UniProtKB"/>
</dbReference>
<dbReference type="GO" id="GO:0001791">
    <property type="term" value="F:IgM binding"/>
    <property type="evidence" value="ECO:0000250"/>
    <property type="project" value="UniProtKB"/>
</dbReference>
<dbReference type="GO" id="GO:0001790">
    <property type="term" value="F:polymeric immunoglobulin binding"/>
    <property type="evidence" value="ECO:0000314"/>
    <property type="project" value="UniProtKB"/>
</dbReference>
<dbReference type="GO" id="GO:0004888">
    <property type="term" value="F:transmembrane signaling receptor activity"/>
    <property type="evidence" value="ECO:0000318"/>
    <property type="project" value="GO_Central"/>
</dbReference>
<dbReference type="GO" id="GO:0006968">
    <property type="term" value="P:cellular defense response"/>
    <property type="evidence" value="ECO:0000304"/>
    <property type="project" value="ProtInc"/>
</dbReference>
<dbReference type="GO" id="GO:0160006">
    <property type="term" value="P:Fc receptor-mediated immune complex endocytosis"/>
    <property type="evidence" value="ECO:0000314"/>
    <property type="project" value="UniProtKB"/>
</dbReference>
<dbReference type="GO" id="GO:0002455">
    <property type="term" value="P:humoral immune response mediated by circulating immunoglobulin"/>
    <property type="evidence" value="ECO:0000250"/>
    <property type="project" value="UniProtKB"/>
</dbReference>
<dbReference type="GO" id="GO:0002414">
    <property type="term" value="P:immunoglobulin transcytosis in epithelial cells"/>
    <property type="evidence" value="ECO:0000250"/>
    <property type="project" value="UniProtKB"/>
</dbReference>
<dbReference type="GO" id="GO:0043066">
    <property type="term" value="P:negative regulation of apoptotic process"/>
    <property type="evidence" value="ECO:0000304"/>
    <property type="project" value="ProtInc"/>
</dbReference>
<dbReference type="GO" id="GO:0050855">
    <property type="term" value="P:regulation of B cell receptor signaling pathway"/>
    <property type="evidence" value="ECO:0000250"/>
    <property type="project" value="UniProtKB"/>
</dbReference>
<dbReference type="GO" id="GO:0007165">
    <property type="term" value="P:signal transduction"/>
    <property type="evidence" value="ECO:0000318"/>
    <property type="project" value="GO_Central"/>
</dbReference>
<dbReference type="CDD" id="cd05716">
    <property type="entry name" value="IgV_pIgR_like"/>
    <property type="match status" value="1"/>
</dbReference>
<dbReference type="FunFam" id="2.60.40.10:FF:001553">
    <property type="entry name" value="Fas apoptotic inhibitory molecule 3"/>
    <property type="match status" value="1"/>
</dbReference>
<dbReference type="Gene3D" id="2.60.40.10">
    <property type="entry name" value="Immunoglobulins"/>
    <property type="match status" value="1"/>
</dbReference>
<dbReference type="InterPro" id="IPR050671">
    <property type="entry name" value="CD300_family_receptors"/>
</dbReference>
<dbReference type="InterPro" id="IPR036179">
    <property type="entry name" value="Ig-like_dom_sf"/>
</dbReference>
<dbReference type="InterPro" id="IPR013783">
    <property type="entry name" value="Ig-like_fold"/>
</dbReference>
<dbReference type="InterPro" id="IPR003599">
    <property type="entry name" value="Ig_sub"/>
</dbReference>
<dbReference type="InterPro" id="IPR013106">
    <property type="entry name" value="Ig_V-set"/>
</dbReference>
<dbReference type="PANTHER" id="PTHR11860:SF59">
    <property type="entry name" value="FAS APOPTOTIC INHIBITORY MOLECULE 3"/>
    <property type="match status" value="1"/>
</dbReference>
<dbReference type="PANTHER" id="PTHR11860">
    <property type="entry name" value="POLYMERIC-IMMUNOGLOBULIN RECEPTOR"/>
    <property type="match status" value="1"/>
</dbReference>
<dbReference type="Pfam" id="PF07686">
    <property type="entry name" value="V-set"/>
    <property type="match status" value="1"/>
</dbReference>
<dbReference type="SMART" id="SM00409">
    <property type="entry name" value="IG"/>
    <property type="match status" value="1"/>
</dbReference>
<dbReference type="SUPFAM" id="SSF48726">
    <property type="entry name" value="Immunoglobulin"/>
    <property type="match status" value="1"/>
</dbReference>
<protein>
    <recommendedName>
        <fullName evidence="16">Immunoglobulin mu Fc receptor</fullName>
        <shortName evidence="16">IgM FcR</shortName>
    </recommendedName>
    <alternativeName>
        <fullName evidence="16">Fas apoptotic inhibitory molecule 3</fullName>
        <shortName evidence="16">FAIM3</shortName>
    </alternativeName>
    <alternativeName>
        <fullName evidence="16">Regulator of Fas-induced apoptosis Toso</fullName>
    </alternativeName>
</protein>
<keyword id="KW-0002">3D-structure</keyword>
<keyword id="KW-0025">Alternative splicing</keyword>
<keyword id="KW-1003">Cell membrane</keyword>
<keyword id="KW-1015">Disulfide bond</keyword>
<keyword id="KW-0967">Endosome</keyword>
<keyword id="KW-0333">Golgi apparatus</keyword>
<keyword id="KW-0391">Immunity</keyword>
<keyword id="KW-0393">Immunoglobulin domain</keyword>
<keyword id="KW-0458">Lysosome</keyword>
<keyword id="KW-0472">Membrane</keyword>
<keyword id="KW-0597">Phosphoprotein</keyword>
<keyword id="KW-1267">Proteomics identification</keyword>
<keyword id="KW-0675">Receptor</keyword>
<keyword id="KW-1185">Reference proteome</keyword>
<keyword id="KW-0964">Secreted</keyword>
<keyword id="KW-0732">Signal</keyword>
<keyword id="KW-0812">Transmembrane</keyword>
<keyword id="KW-1133">Transmembrane helix</keyword>
<comment type="function">
    <text evidence="4 6 7 8 9 10 11 12">High-affinity Fc receptor for immunoglobulin M (IgM), both secreted and membrane-bound IgM (PubMed:19858324, PubMed:22675200, PubMed:36949194, PubMed:37095205). Primarily regulates IgM transport and homeostasis. In lymphoid cells, enables exocytosis of membrane-bound IgM on the plasma membrane as well as endocytosis of IgM-antigen complexes toward lysosomes for degradation. In mucosal epithelium, mediates retrotranscytosis of antigen-IgM complexes across mucosal M cells toward antigen-presenting cells in mucosal lymphoid tissues (PubMed:21908732, PubMed:28230186). Triggers costimulatory signaling and mediates most of IgM effector functions involved in B cell development and primary immune response to infection. Likely limits tonic IgM BCR signaling to self-antigens for proper negative selection of autoreactive B cells in the bone marrow and for the maintenance of regulatory B cell pool in peripheral lymphoid organs. Mediates antibody responses to T cell-dependent and T cell-independent antigens and promotes induction of an efficient neutralizing IgG response. Engages in cross-talk with antigen-receptor signaling via the non-canonical NF-kappa-B, MAP kinases and calcium signaling pathways (PubMed:19858324, PubMed:22675200, PubMed:25601920, PubMed:30840890).</text>
</comment>
<comment type="subunit">
    <text evidence="9 11 12">Interacts (via Ig-like domain) with IGHM (via CH4/Cmu4 domain), both secreted and membrane-bound IgM; the interaction is glycan-independent and multivalent theoretically involving up to eight binding sites for the IgM pentamer.</text>
</comment>
<comment type="subcellular location">
    <subcellularLocation>
        <location evidence="4 5 7 10">Cell membrane</location>
        <topology evidence="2">Single-pass membrane protein</topology>
    </subcellularLocation>
    <subcellularLocation>
        <location evidence="6">Early endosome membrane</location>
        <topology evidence="2">Single-pass membrane protein</topology>
    </subcellularLocation>
    <subcellularLocation>
        <location evidence="6">Golgi apparatus</location>
        <location evidence="6">trans-Golgi network membrane</location>
        <topology evidence="2">Single-pass membrane protein</topology>
    </subcellularLocation>
    <subcellularLocation>
        <location evidence="6">Lysosome membrane</location>
        <topology evidence="2">Single-pass membrane protein</topology>
    </subcellularLocation>
    <text evidence="10">Continuously recycles between cytoplasmic pool and the plasma membrane to bind as much IgM as possible.</text>
</comment>
<comment type="subcellular location">
    <molecule>Isoform 3</molecule>
    <subcellularLocation>
        <location evidence="5">Secreted</location>
    </subcellularLocation>
    <text evidence="5">Detected in the serum.</text>
</comment>
<comment type="alternative products">
    <event type="alternative splicing"/>
    <isoform>
        <id>O60667-1</id>
        <name>1</name>
        <sequence type="displayed"/>
    </isoform>
    <isoform>
        <id>O60667-2</id>
        <name>2</name>
        <sequence type="described" ref="VSP_042947"/>
    </isoform>
    <isoform>
        <id>O60667-3</id>
        <name>3</name>
        <sequence type="described" ref="VSP_045188 VSP_045189"/>
    </isoform>
</comment>
<comment type="tissue specificity">
    <text evidence="4 5 6 7 10 13">Expressed by CD19-positive B cells and CD4-positive and CD8-positive T cell populations in primary and secondary lymphoid tissues (at protein level). Among B cell subsets, detected in a subset of bone marrow pro- and pre-B cells, in most follicular and memory B cells and in a small subset of germinal center B cells (at protein level). Expressed at lower levels in CD56-positive NK cells (at protein level) (PubMed:19858324, PubMed:21908732, PubMed:22675200, PubMed:30840890). Expressed in lymph nodes, lung, thymus and kidneys. Very weak expression detected in spleen, liver, heart, and salivary gland.</text>
</comment>
<comment type="induction">
    <text evidence="4 6 7 10 13">Regulated by circulating IgM levels and immune cell activation signaling. Down-regulated in activated T cells, effector memory and central memory T cells, as well as in activated NK cells (PubMed:19858324, PubMed:22675200, PubMed:30840890, PubMed:9586636). Transcriptionally down-regulated upon TLR9 signaling (PubMed:21908732). Down-regulated in response to IL7 and IL15 (PubMed:30840890). Down-regulated in old age (PubMed:30840890).</text>
</comment>
<comment type="domain">
    <text evidence="11 12">The Ig-like V-set domain comprises three loops analogous to the complementarity-determining regions (CDR) of Ig variable domains, which are responsible for engaging IgM. Mediates multivalent interactions with the CH4 domains of pentameric IgM, facilitating receptor clustering and signaling.</text>
</comment>
<comment type="PTM">
    <text evidence="4">Phosphorylated on both Tyr and Ser residues.</text>
</comment>
<comment type="PTM">
    <text evidence="4 6">O-glycosylated. Sialylated. O-linked glycans regulate trafficking to the plasma membrane.</text>
</comment>
<comment type="miscellaneous">
    <text evidence="6 13">Expressed in lymphoid cell lines such as Jurkat, CEM-T4, MOLT-4, HB11;19 and Reh. No expression detected in nonhematopoietic cell lines including Hep-G2, HEK293 and HeLa. Detected at high levels in chronic lymphocytic leukemia cells.</text>
</comment>
<comment type="miscellaneous">
    <text evidence="17">'Toso' is a Japanese liquor drunk on New Year's day to celebrate long life and eternal youth.</text>
</comment>
<comment type="caution">
    <text evidence="4 7 13 16">Initially it was identified as a potent inhibitor of FAS-induced apoptosis. The findings were latter disputed by other groups and it was shown to have no intrinsic activity inhibiting FAS-mediated apoptosis.</text>
</comment>
<feature type="signal peptide" evidence="2">
    <location>
        <begin position="1"/>
        <end position="16"/>
    </location>
</feature>
<feature type="chain" id="PRO_0000284421" description="Immunoglobulin mu Fc receptor">
    <location>
        <begin position="17"/>
        <end position="390"/>
    </location>
</feature>
<feature type="topological domain" description="Extracellular" evidence="18">
    <location>
        <begin position="17"/>
        <end position="251"/>
    </location>
</feature>
<feature type="transmembrane region" description="Helical" evidence="2">
    <location>
        <begin position="252"/>
        <end position="272"/>
    </location>
</feature>
<feature type="topological domain" description="Cytoplasmic" evidence="18">
    <location>
        <begin position="273"/>
        <end position="390"/>
    </location>
</feature>
<feature type="domain" description="Ig-like" evidence="2">
    <location>
        <begin position="23"/>
        <end position="123"/>
    </location>
</feature>
<feature type="region of interest" description="CDR4">
    <location>
        <begin position="33"/>
        <end position="115"/>
    </location>
</feature>
<feature type="region of interest" description="CDR1">
    <location>
        <begin position="40"/>
        <end position="45"/>
    </location>
</feature>
<feature type="region of interest" description="CDR2">
    <location>
        <begin position="59"/>
        <end position="70"/>
    </location>
</feature>
<feature type="region of interest" description="CDR3">
    <location>
        <begin position="106"/>
        <end position="115"/>
    </location>
</feature>
<feature type="region of interest" description="Disordered" evidence="3">
    <location>
        <begin position="166"/>
        <end position="204"/>
    </location>
</feature>
<feature type="region of interest" description="Disordered" evidence="3">
    <location>
        <begin position="293"/>
        <end position="348"/>
    </location>
</feature>
<feature type="compositionally biased region" description="Low complexity" evidence="3">
    <location>
        <begin position="293"/>
        <end position="311"/>
    </location>
</feature>
<feature type="compositionally biased region" description="Low complexity" evidence="3">
    <location>
        <begin position="325"/>
        <end position="334"/>
    </location>
</feature>
<feature type="compositionally biased region" description="Pro residues" evidence="3">
    <location>
        <begin position="335"/>
        <end position="346"/>
    </location>
</feature>
<feature type="site" description="Receptor capping" evidence="8">
    <location>
        <position position="253"/>
    </location>
</feature>
<feature type="site" description="Receptor-mediated endocytosis" evidence="8">
    <location>
        <position position="366"/>
    </location>
</feature>
<feature type="site" description="Receptor-mediated endocytosis" evidence="8">
    <location>
        <position position="385"/>
    </location>
</feature>
<feature type="modified residue" description="Phosphothreonine" evidence="1">
    <location>
        <position position="92"/>
    </location>
</feature>
<feature type="disulfide bond" evidence="11 12 20 21">
    <location>
        <begin position="37"/>
        <end position="104"/>
    </location>
</feature>
<feature type="disulfide bond" evidence="11 12 20 21">
    <location>
        <begin position="49"/>
        <end position="58"/>
    </location>
</feature>
<feature type="splice variant" id="VSP_042947" description="In isoform 2." evidence="14">
    <location>
        <begin position="13"/>
        <end position="124"/>
    </location>
</feature>
<feature type="splice variant" id="VSP_045188" description="In isoform 3." evidence="15">
    <original>RALDYGSQS</original>
    <variation>SPLQAGPPT</variation>
    <location>
        <begin position="237"/>
        <end position="245"/>
    </location>
</feature>
<feature type="splice variant" id="VSP_045189" description="In isoform 3." evidence="15">
    <original>GQGFHILIPTILGLFLLALLGLVVKRAVERRKALSRRARRLAVRMRALESSQRPRGSPRPRSQNNIYSACPRRARGADAAGTGEAPVPGPGAPLPPAPLQVSESPWLHAPSLKTSCEYVSLYHQPAAMMEDSDSDDYINVPA</original>
    <variation>DARPGELPEAPRVAATALPKQHLQRLPAARSWSGRCRHRGGPRSRPRSAVAPRPAAGV</variation>
    <location>
        <begin position="249"/>
        <end position="390"/>
    </location>
</feature>
<feature type="mutagenesis site" description="Completely abolishes interaction with IgM resulting in impaired IgM internalization." evidence="11">
    <original>R</original>
    <variation>A</variation>
    <location>
        <position position="45"/>
    </location>
</feature>
<feature type="mutagenesis site" description="Completely abolishes interaction with IgM; when associated with A-69." evidence="11">
    <original>F</original>
    <variation>A</variation>
    <location>
        <position position="67"/>
    </location>
</feature>
<feature type="mutagenesis site" description="Completely abolishes interaction with IgM; when associated with A-67." evidence="11">
    <original>K</original>
    <variation>A</variation>
    <location>
        <position position="69"/>
    </location>
</feature>
<feature type="mutagenesis site" description="Displays reduced interaction with IgM; when associated with A-112." evidence="11">
    <original>N</original>
    <variation>A</variation>
    <location>
        <position position="109"/>
    </location>
</feature>
<feature type="mutagenesis site" description="Displays reduced interaction with IgM; when associated with A-109." evidence="11">
    <original>R</original>
    <variation>A</variation>
    <location>
        <position position="112"/>
    </location>
</feature>
<feature type="mutagenesis site" description="Impairs O-glycosylation and trafficking to the plasma membrane; when associated with A-165." evidence="6">
    <original>T</original>
    <variation>A</variation>
    <location>
        <position position="164"/>
    </location>
</feature>
<feature type="mutagenesis site" description="Impairs O-glycosylation and trafficking to the plasma membrane; when associated with A-164." evidence="6">
    <original>T</original>
    <variation>A</variation>
    <location>
        <position position="165"/>
    </location>
</feature>
<feature type="mutagenesis site" description="Impairs O-glycosylation and trafficking to the plasma membrane; when associated with A-179, A-181, A-182 and A-185." evidence="6">
    <original>S</original>
    <variation>A</variation>
    <location>
        <position position="178"/>
    </location>
</feature>
<feature type="mutagenesis site" description="Impairs O-glycosylation and trafficking to the plasma membrane; when associated with A-178, A-181, A-182 and A-185." evidence="6">
    <original>S</original>
    <variation>A</variation>
    <location>
        <position position="179"/>
    </location>
</feature>
<feature type="mutagenesis site" description="Impairs O-glycosylation and trafficking to the plasma membrane; when associated with A-178, A-179, A-182 and A-185." evidence="6">
    <original>T</original>
    <variation>A</variation>
    <location>
        <position position="181"/>
    </location>
</feature>
<feature type="mutagenesis site" description="Impairs O-glycosylation and trafficking to the plasma membrane; when associated with A-178, A-179, A-181 and A-185." evidence="6">
    <original>T</original>
    <variation>A</variation>
    <location>
        <position position="182"/>
    </location>
</feature>
<feature type="mutagenesis site" description="Impairs O-glycosylation and trafficking to the plasma membrane; when associated with A-178, A-179, A-181 and A-182." evidence="6">
    <original>T</original>
    <variation>A</variation>
    <location>
        <position position="185"/>
    </location>
</feature>
<feature type="mutagenesis site" description="Does not affect O-glycosylation or trafficking to the plasma membrane." evidence="6">
    <original>T</original>
    <variation>A</variation>
    <location>
        <position position="203"/>
    </location>
</feature>
<feature type="mutagenesis site" description="Enhances receptor capping." evidence="8">
    <original>H</original>
    <variation>F</variation>
    <location>
        <position position="253"/>
    </location>
</feature>
<feature type="mutagenesis site" description="Has no effect on IgM binding or trafficking." evidence="6">
    <location>
        <begin position="273"/>
        <end position="323"/>
    </location>
</feature>
<feature type="mutagenesis site" description="Does not affect receptor-mediated endocytosis. Abolishes calcium mobilization upon co-ligation of FCMR and CD2." evidence="8">
    <original>Y</original>
    <variation>F</variation>
    <location>
        <position position="315"/>
    </location>
</feature>
<feature type="mutagenesis site" description="Abolishes trafficking to the plasma membrane." evidence="6">
    <location>
        <begin position="324"/>
        <end position="357"/>
    </location>
</feature>
<feature type="mutagenesis site" description="Does not affect expression or IgM binding at the cell surface. Abolishes internalization via endocytosis." evidence="6">
    <location>
        <begin position="359"/>
        <end position="390"/>
    </location>
</feature>
<feature type="mutagenesis site" description="Abolishes receptor-mediated endocytosis and calcium mobilization upon co-ligation of FCMR and CD2." evidence="8">
    <original>Y</original>
    <variation>F</variation>
    <location>
        <position position="366"/>
    </location>
</feature>
<feature type="mutagenesis site" description="Abolishes receptor-mediated endocytosis and calcium mobilization upon co-ligation of FCMR and CD2." evidence="8">
    <original>Y</original>
    <variation>F</variation>
    <location>
        <position position="385"/>
    </location>
</feature>
<feature type="strand" evidence="22">
    <location>
        <begin position="22"/>
        <end position="28"/>
    </location>
</feature>
<feature type="strand" evidence="22">
    <location>
        <begin position="33"/>
        <end position="38"/>
    </location>
</feature>
<feature type="strand" evidence="22">
    <location>
        <begin position="46"/>
        <end position="51"/>
    </location>
</feature>
<feature type="turn" evidence="22">
    <location>
        <begin position="53"/>
        <end position="55"/>
    </location>
</feature>
<feature type="strand" evidence="22">
    <location>
        <begin position="57"/>
        <end position="63"/>
    </location>
</feature>
<feature type="turn" evidence="22">
    <location>
        <begin position="64"/>
        <end position="66"/>
    </location>
</feature>
<feature type="helix" evidence="22">
    <location>
        <begin position="70"/>
        <end position="72"/>
    </location>
</feature>
<feature type="strand" evidence="22">
    <location>
        <begin position="75"/>
        <end position="81"/>
    </location>
</feature>
<feature type="helix" evidence="22">
    <location>
        <begin position="82"/>
        <end position="84"/>
    </location>
</feature>
<feature type="strand" evidence="22">
    <location>
        <begin position="86"/>
        <end position="91"/>
    </location>
</feature>
<feature type="helix" evidence="22">
    <location>
        <begin position="96"/>
        <end position="98"/>
    </location>
</feature>
<feature type="strand" evidence="22">
    <location>
        <begin position="100"/>
        <end position="108"/>
    </location>
</feature>
<feature type="strand" evidence="22">
    <location>
        <begin position="110"/>
        <end position="123"/>
    </location>
</feature>
<reference key="1">
    <citation type="journal article" date="1998" name="Immunity">
        <title>Toso, a cell surface, specific regulator of Fas-induced apoptosis in T cells.</title>
        <authorList>
            <person name="Hitoshi Y."/>
            <person name="Lorens J."/>
            <person name="Kitada S."/>
            <person name="Fisher J."/>
            <person name="LaBarge M."/>
            <person name="Ring H.Z."/>
            <person name="Francke U."/>
            <person name="Reed J.C."/>
            <person name="Kinoshita S."/>
            <person name="Nolan G.P."/>
        </authorList>
    </citation>
    <scope>NUCLEOTIDE SEQUENCE [MRNA] (ISOFORM 1)</scope>
    <scope>TISSUE SPECIFICITY</scope>
    <scope>INDUCTION</scope>
    <scope>CAUTION</scope>
</reference>
<reference key="2">
    <citation type="journal article" date="2011" name="Blood">
        <title>Enhanced levels of both the membrane-bound and soluble forms of IgM Fc receptor (Fc?R) in patients with chronic lymphocytic leukemia.</title>
        <authorList>
            <person name="Li F.J."/>
            <person name="Kubagawa Y."/>
            <person name="McCollum M.K."/>
            <person name="Wilson L."/>
            <person name="Motohashi T."/>
            <person name="Bertoli L.F."/>
            <person name="Barton J.C."/>
            <person name="Barnes S."/>
            <person name="Davis R.S."/>
            <person name="Kubagawa H."/>
        </authorList>
    </citation>
    <scope>NUCLEOTIDE SEQUENCE [MRNA] (ISOFORM 3)</scope>
    <scope>IDENTIFICATION BY MASS SPECTROMETRY</scope>
    <scope>SUBCELLULAR LOCATION</scope>
    <scope>TISSUE SPECIFICITY</scope>
</reference>
<reference key="3">
    <citation type="submission" date="2003-05" db="EMBL/GenBank/DDBJ databases">
        <title>Cloning of human full-length CDSs in BD Creator(TM) system donor vector.</title>
        <authorList>
            <person name="Kalnine N."/>
            <person name="Chen X."/>
            <person name="Rolfs A."/>
            <person name="Halleck A."/>
            <person name="Hines L."/>
            <person name="Eisenstein S."/>
            <person name="Koundinya M."/>
            <person name="Raphael J."/>
            <person name="Moreira D."/>
            <person name="Kelley T."/>
            <person name="LaBaer J."/>
            <person name="Lin Y."/>
            <person name="Phelan M."/>
            <person name="Farmer A."/>
        </authorList>
    </citation>
    <scope>NUCLEOTIDE SEQUENCE [LARGE SCALE MRNA] (ISOFORM 1)</scope>
</reference>
<reference key="4">
    <citation type="journal article" date="2004" name="Nat. Genet.">
        <title>Complete sequencing and characterization of 21,243 full-length human cDNAs.</title>
        <authorList>
            <person name="Ota T."/>
            <person name="Suzuki Y."/>
            <person name="Nishikawa T."/>
            <person name="Otsuki T."/>
            <person name="Sugiyama T."/>
            <person name="Irie R."/>
            <person name="Wakamatsu A."/>
            <person name="Hayashi K."/>
            <person name="Sato H."/>
            <person name="Nagai K."/>
            <person name="Kimura K."/>
            <person name="Makita H."/>
            <person name="Sekine M."/>
            <person name="Obayashi M."/>
            <person name="Nishi T."/>
            <person name="Shibahara T."/>
            <person name="Tanaka T."/>
            <person name="Ishii S."/>
            <person name="Yamamoto J."/>
            <person name="Saito K."/>
            <person name="Kawai Y."/>
            <person name="Isono Y."/>
            <person name="Nakamura Y."/>
            <person name="Nagahari K."/>
            <person name="Murakami K."/>
            <person name="Yasuda T."/>
            <person name="Iwayanagi T."/>
            <person name="Wagatsuma M."/>
            <person name="Shiratori A."/>
            <person name="Sudo H."/>
            <person name="Hosoiri T."/>
            <person name="Kaku Y."/>
            <person name="Kodaira H."/>
            <person name="Kondo H."/>
            <person name="Sugawara M."/>
            <person name="Takahashi M."/>
            <person name="Kanda K."/>
            <person name="Yokoi T."/>
            <person name="Furuya T."/>
            <person name="Kikkawa E."/>
            <person name="Omura Y."/>
            <person name="Abe K."/>
            <person name="Kamihara K."/>
            <person name="Katsuta N."/>
            <person name="Sato K."/>
            <person name="Tanikawa M."/>
            <person name="Yamazaki M."/>
            <person name="Ninomiya K."/>
            <person name="Ishibashi T."/>
            <person name="Yamashita H."/>
            <person name="Murakawa K."/>
            <person name="Fujimori K."/>
            <person name="Tanai H."/>
            <person name="Kimata M."/>
            <person name="Watanabe M."/>
            <person name="Hiraoka S."/>
            <person name="Chiba Y."/>
            <person name="Ishida S."/>
            <person name="Ono Y."/>
            <person name="Takiguchi S."/>
            <person name="Watanabe S."/>
            <person name="Yosida M."/>
            <person name="Hotuta T."/>
            <person name="Kusano J."/>
            <person name="Kanehori K."/>
            <person name="Takahashi-Fujii A."/>
            <person name="Hara H."/>
            <person name="Tanase T.-O."/>
            <person name="Nomura Y."/>
            <person name="Togiya S."/>
            <person name="Komai F."/>
            <person name="Hara R."/>
            <person name="Takeuchi K."/>
            <person name="Arita M."/>
            <person name="Imose N."/>
            <person name="Musashino K."/>
            <person name="Yuuki H."/>
            <person name="Oshima A."/>
            <person name="Sasaki N."/>
            <person name="Aotsuka S."/>
            <person name="Yoshikawa Y."/>
            <person name="Matsunawa H."/>
            <person name="Ichihara T."/>
            <person name="Shiohata N."/>
            <person name="Sano S."/>
            <person name="Moriya S."/>
            <person name="Momiyama H."/>
            <person name="Satoh N."/>
            <person name="Takami S."/>
            <person name="Terashima Y."/>
            <person name="Suzuki O."/>
            <person name="Nakagawa S."/>
            <person name="Senoh A."/>
            <person name="Mizoguchi H."/>
            <person name="Goto Y."/>
            <person name="Shimizu F."/>
            <person name="Wakebe H."/>
            <person name="Hishigaki H."/>
            <person name="Watanabe T."/>
            <person name="Sugiyama A."/>
            <person name="Takemoto M."/>
            <person name="Kawakami B."/>
            <person name="Yamazaki M."/>
            <person name="Watanabe K."/>
            <person name="Kumagai A."/>
            <person name="Itakura S."/>
            <person name="Fukuzumi Y."/>
            <person name="Fujimori Y."/>
            <person name="Komiyama M."/>
            <person name="Tashiro H."/>
            <person name="Tanigami A."/>
            <person name="Fujiwara T."/>
            <person name="Ono T."/>
            <person name="Yamada K."/>
            <person name="Fujii Y."/>
            <person name="Ozaki K."/>
            <person name="Hirao M."/>
            <person name="Ohmori Y."/>
            <person name="Kawabata A."/>
            <person name="Hikiji T."/>
            <person name="Kobatake N."/>
            <person name="Inagaki H."/>
            <person name="Ikema Y."/>
            <person name="Okamoto S."/>
            <person name="Okitani R."/>
            <person name="Kawakami T."/>
            <person name="Noguchi S."/>
            <person name="Itoh T."/>
            <person name="Shigeta K."/>
            <person name="Senba T."/>
            <person name="Matsumura K."/>
            <person name="Nakajima Y."/>
            <person name="Mizuno T."/>
            <person name="Morinaga M."/>
            <person name="Sasaki M."/>
            <person name="Togashi T."/>
            <person name="Oyama M."/>
            <person name="Hata H."/>
            <person name="Watanabe M."/>
            <person name="Komatsu T."/>
            <person name="Mizushima-Sugano J."/>
            <person name="Satoh T."/>
            <person name="Shirai Y."/>
            <person name="Takahashi Y."/>
            <person name="Nakagawa K."/>
            <person name="Okumura K."/>
            <person name="Nagase T."/>
            <person name="Nomura N."/>
            <person name="Kikuchi H."/>
            <person name="Masuho Y."/>
            <person name="Yamashita R."/>
            <person name="Nakai K."/>
            <person name="Yada T."/>
            <person name="Nakamura Y."/>
            <person name="Ohara O."/>
            <person name="Isogai T."/>
            <person name="Sugano S."/>
        </authorList>
    </citation>
    <scope>NUCLEOTIDE SEQUENCE [LARGE SCALE MRNA] (ISOFORMS 1 AND 2)</scope>
    <source>
        <tissue>Spleen</tissue>
    </source>
</reference>
<reference key="5">
    <citation type="journal article" date="2006" name="Nature">
        <title>The DNA sequence and biological annotation of human chromosome 1.</title>
        <authorList>
            <person name="Gregory S.G."/>
            <person name="Barlow K.F."/>
            <person name="McLay K.E."/>
            <person name="Kaul R."/>
            <person name="Swarbreck D."/>
            <person name="Dunham A."/>
            <person name="Scott C.E."/>
            <person name="Howe K.L."/>
            <person name="Woodfine K."/>
            <person name="Spencer C.C.A."/>
            <person name="Jones M.C."/>
            <person name="Gillson C."/>
            <person name="Searle S."/>
            <person name="Zhou Y."/>
            <person name="Kokocinski F."/>
            <person name="McDonald L."/>
            <person name="Evans R."/>
            <person name="Phillips K."/>
            <person name="Atkinson A."/>
            <person name="Cooper R."/>
            <person name="Jones C."/>
            <person name="Hall R.E."/>
            <person name="Andrews T.D."/>
            <person name="Lloyd C."/>
            <person name="Ainscough R."/>
            <person name="Almeida J.P."/>
            <person name="Ambrose K.D."/>
            <person name="Anderson F."/>
            <person name="Andrew R.W."/>
            <person name="Ashwell R.I.S."/>
            <person name="Aubin K."/>
            <person name="Babbage A.K."/>
            <person name="Bagguley C.L."/>
            <person name="Bailey J."/>
            <person name="Beasley H."/>
            <person name="Bethel G."/>
            <person name="Bird C.P."/>
            <person name="Bray-Allen S."/>
            <person name="Brown J.Y."/>
            <person name="Brown A.J."/>
            <person name="Buckley D."/>
            <person name="Burton J."/>
            <person name="Bye J."/>
            <person name="Carder C."/>
            <person name="Chapman J.C."/>
            <person name="Clark S.Y."/>
            <person name="Clarke G."/>
            <person name="Clee C."/>
            <person name="Cobley V."/>
            <person name="Collier R.E."/>
            <person name="Corby N."/>
            <person name="Coville G.J."/>
            <person name="Davies J."/>
            <person name="Deadman R."/>
            <person name="Dunn M."/>
            <person name="Earthrowl M."/>
            <person name="Ellington A.G."/>
            <person name="Errington H."/>
            <person name="Frankish A."/>
            <person name="Frankland J."/>
            <person name="French L."/>
            <person name="Garner P."/>
            <person name="Garnett J."/>
            <person name="Gay L."/>
            <person name="Ghori M.R.J."/>
            <person name="Gibson R."/>
            <person name="Gilby L.M."/>
            <person name="Gillett W."/>
            <person name="Glithero R.J."/>
            <person name="Grafham D.V."/>
            <person name="Griffiths C."/>
            <person name="Griffiths-Jones S."/>
            <person name="Grocock R."/>
            <person name="Hammond S."/>
            <person name="Harrison E.S.I."/>
            <person name="Hart E."/>
            <person name="Haugen E."/>
            <person name="Heath P.D."/>
            <person name="Holmes S."/>
            <person name="Holt K."/>
            <person name="Howden P.J."/>
            <person name="Hunt A.R."/>
            <person name="Hunt S.E."/>
            <person name="Hunter G."/>
            <person name="Isherwood J."/>
            <person name="James R."/>
            <person name="Johnson C."/>
            <person name="Johnson D."/>
            <person name="Joy A."/>
            <person name="Kay M."/>
            <person name="Kershaw J.K."/>
            <person name="Kibukawa M."/>
            <person name="Kimberley A.M."/>
            <person name="King A."/>
            <person name="Knights A.J."/>
            <person name="Lad H."/>
            <person name="Laird G."/>
            <person name="Lawlor S."/>
            <person name="Leongamornlert D.A."/>
            <person name="Lloyd D.M."/>
            <person name="Loveland J."/>
            <person name="Lovell J."/>
            <person name="Lush M.J."/>
            <person name="Lyne R."/>
            <person name="Martin S."/>
            <person name="Mashreghi-Mohammadi M."/>
            <person name="Matthews L."/>
            <person name="Matthews N.S.W."/>
            <person name="McLaren S."/>
            <person name="Milne S."/>
            <person name="Mistry S."/>
            <person name="Moore M.J.F."/>
            <person name="Nickerson T."/>
            <person name="O'Dell C.N."/>
            <person name="Oliver K."/>
            <person name="Palmeiri A."/>
            <person name="Palmer S.A."/>
            <person name="Parker A."/>
            <person name="Patel D."/>
            <person name="Pearce A.V."/>
            <person name="Peck A.I."/>
            <person name="Pelan S."/>
            <person name="Phelps K."/>
            <person name="Phillimore B.J."/>
            <person name="Plumb R."/>
            <person name="Rajan J."/>
            <person name="Raymond C."/>
            <person name="Rouse G."/>
            <person name="Saenphimmachak C."/>
            <person name="Sehra H.K."/>
            <person name="Sheridan E."/>
            <person name="Shownkeen R."/>
            <person name="Sims S."/>
            <person name="Skuce C.D."/>
            <person name="Smith M."/>
            <person name="Steward C."/>
            <person name="Subramanian S."/>
            <person name="Sycamore N."/>
            <person name="Tracey A."/>
            <person name="Tromans A."/>
            <person name="Van Helmond Z."/>
            <person name="Wall M."/>
            <person name="Wallis J.M."/>
            <person name="White S."/>
            <person name="Whitehead S.L."/>
            <person name="Wilkinson J.E."/>
            <person name="Willey D.L."/>
            <person name="Williams H."/>
            <person name="Wilming L."/>
            <person name="Wray P.W."/>
            <person name="Wu Z."/>
            <person name="Coulson A."/>
            <person name="Vaudin M."/>
            <person name="Sulston J.E."/>
            <person name="Durbin R.M."/>
            <person name="Hubbard T."/>
            <person name="Wooster R."/>
            <person name="Dunham I."/>
            <person name="Carter N.P."/>
            <person name="McVean G."/>
            <person name="Ross M.T."/>
            <person name="Harrow J."/>
            <person name="Olson M.V."/>
            <person name="Beck S."/>
            <person name="Rogers J."/>
            <person name="Bentley D.R."/>
        </authorList>
    </citation>
    <scope>NUCLEOTIDE SEQUENCE [LARGE SCALE GENOMIC DNA]</scope>
</reference>
<reference key="6">
    <citation type="submission" date="2005-09" db="EMBL/GenBank/DDBJ databases">
        <authorList>
            <person name="Mural R.J."/>
            <person name="Istrail S."/>
            <person name="Sutton G.G."/>
            <person name="Florea L."/>
            <person name="Halpern A.L."/>
            <person name="Mobarry C.M."/>
            <person name="Lippert R."/>
            <person name="Walenz B."/>
            <person name="Shatkay H."/>
            <person name="Dew I."/>
            <person name="Miller J.R."/>
            <person name="Flanigan M.J."/>
            <person name="Edwards N.J."/>
            <person name="Bolanos R."/>
            <person name="Fasulo D."/>
            <person name="Halldorsson B.V."/>
            <person name="Hannenhalli S."/>
            <person name="Turner R."/>
            <person name="Yooseph S."/>
            <person name="Lu F."/>
            <person name="Nusskern D.R."/>
            <person name="Shue B.C."/>
            <person name="Zheng X.H."/>
            <person name="Zhong F."/>
            <person name="Delcher A.L."/>
            <person name="Huson D.H."/>
            <person name="Kravitz S.A."/>
            <person name="Mouchard L."/>
            <person name="Reinert K."/>
            <person name="Remington K.A."/>
            <person name="Clark A.G."/>
            <person name="Waterman M.S."/>
            <person name="Eichler E.E."/>
            <person name="Adams M.D."/>
            <person name="Hunkapiller M.W."/>
            <person name="Myers E.W."/>
            <person name="Venter J.C."/>
        </authorList>
    </citation>
    <scope>NUCLEOTIDE SEQUENCE [LARGE SCALE GENOMIC DNA]</scope>
</reference>
<reference key="7">
    <citation type="journal article" date="2004" name="Genome Res.">
        <title>The status, quality, and expansion of the NIH full-length cDNA project: the Mammalian Gene Collection (MGC).</title>
        <authorList>
            <consortium name="The MGC Project Team"/>
        </authorList>
    </citation>
    <scope>NUCLEOTIDE SEQUENCE [LARGE SCALE MRNA] (ISOFORM 1)</scope>
    <source>
        <tissue>B-cell</tissue>
    </source>
</reference>
<reference key="8">
    <citation type="journal article" date="2009" name="J. Exp. Med.">
        <title>Identity of the elusive IgM Fc receptor (FcmuR) in humans.</title>
        <authorList>
            <person name="Kubagawa H."/>
            <person name="Oka S."/>
            <person name="Kubagawa Y."/>
            <person name="Torii I."/>
            <person name="Takayama E."/>
            <person name="Kang D.W."/>
            <person name="Gartland G.L."/>
            <person name="Bertoli L.F."/>
            <person name="Mori H."/>
            <person name="Takatsu H."/>
            <person name="Kitamura T."/>
            <person name="Ohno H."/>
            <person name="Wang J.Y."/>
        </authorList>
    </citation>
    <scope>FUNCTION</scope>
    <scope>SUBCELLULAR LOCATION</scope>
    <scope>TISSUE SPECIFICITY</scope>
    <scope>INDUCTION</scope>
    <scope>PHOSPHORYLATION</scope>
    <scope>GLYCOSYLATION</scope>
    <scope>CAUTION</scope>
</reference>
<reference key="9">
    <citation type="journal article" date="2011" name="J. Immunol.">
        <title>TOSO, the Fcmicro receptor, is highly expressed on chronic lymphocytic leukemia B cells, internalizes upon IgM binding, shuttles to the lysosome, and is downregulated in response to TLR activation.</title>
        <authorList>
            <person name="Vire B."/>
            <person name="David A."/>
            <person name="Wiestner A."/>
        </authorList>
    </citation>
    <scope>FUNCTION</scope>
    <scope>SUBCELLULAR LOCATION</scope>
    <scope>TISSUE SPECIFICITY</scope>
    <scope>INDUCTION</scope>
    <scope>GLYCOSYLATION</scope>
    <scope>MUTAGENESIS OF THR-164; THR-165; SER-175; SER-178; SER-179; THR-181; THR-182; THR-185; THR-203; 273-LYS--ARG-323; 324-GLY--ALA-357 AND 359-SER--ALA-390</scope>
</reference>
<reference key="10">
    <citation type="journal article" date="2012" name="J. Immunol.">
        <title>Toso, a functional IgM receptor, is regulated by IL-2 in T and NK cells.</title>
        <authorList>
            <person name="Murakami Y."/>
            <person name="Narayanan S."/>
            <person name="Su S."/>
            <person name="Childs R."/>
            <person name="Krzewski K."/>
            <person name="Borrego F."/>
            <person name="Weck J."/>
            <person name="Coligan J.E."/>
        </authorList>
    </citation>
    <scope>FUNCTION</scope>
    <scope>SUBCELLULAR LOCATION</scope>
    <scope>TISSUE SPECIFICITY</scope>
    <scope>INDUCTION</scope>
    <scope>CAUTION</scope>
</reference>
<reference key="11">
    <citation type="journal article" date="2015" name="J. Immunol.">
        <title>Unique ligand-binding property of the human IgM Fc receptor.</title>
        <authorList>
            <person name="Honjo K."/>
            <person name="Kubagawa Y."/>
            <person name="Kearney J.F."/>
            <person name="Kubagawa H."/>
        </authorList>
    </citation>
    <scope>FUNCTION</scope>
    <scope>MUTAGENESIS OF HIS-253; TYR-315; TYR-366 AND TYR-385</scope>
    <scope>SITE</scope>
</reference>
<reference key="12">
    <citation type="journal article" date="2015" name="J. Immunol.">
        <title>Nomenclature of Toso, Fas apoptosis inhibitory molecule 3, and IgM FcR.</title>
        <authorList>
            <person name="Kubagawa H."/>
            <person name="Carroll M.C."/>
            <person name="Jacob C.O."/>
            <person name="Lang K.S."/>
            <person name="Lee K.H."/>
            <person name="Mak T."/>
            <person name="McAndrews M."/>
            <person name="Morse H.C. III"/>
            <person name="Nolan G.P."/>
            <person name="Ohno H."/>
            <person name="Richter G.H."/>
            <person name="Seal R."/>
            <person name="Wang J.Y."/>
            <person name="Wiestner A."/>
            <person name="Coligan J.E."/>
        </authorList>
    </citation>
    <scope>NOMENCLATURE</scope>
    <scope>CAUTION</scope>
</reference>
<reference key="13">
    <citation type="journal article" date="2017" name="Sci. Rep.">
        <title>Glycan-independent binding and internalization of human IgM to FCMR, its cognate cellular receptor.</title>
        <authorList>
            <person name="Lloyd K.A."/>
            <person name="Wang J."/>
            <person name="Urban B.C."/>
            <person name="Czajkowsky D.M."/>
            <person name="Pleass R.J."/>
        </authorList>
    </citation>
    <scope>FUNCTION</scope>
    <scope>SUBUNIT</scope>
</reference>
<reference key="14">
    <citation type="journal article" date="2019" name="Cell Rep.">
        <title>Fcmu receptor as a Costimulatory Molecule for T Cells.</title>
        <authorList>
            <person name="Meryk A."/>
            <person name="Pangrazzi L."/>
            <person name="Hagen M."/>
            <person name="Hatzmann F."/>
            <person name="Jenewein B."/>
            <person name="Jakic B."/>
            <person name="Hermann-Kleiter N."/>
            <person name="Baier G."/>
            <person name="Jylhaevae J."/>
            <person name="Hurme M."/>
            <person name="Trieb K."/>
            <person name="Grubeck-Loebenstein B."/>
        </authorList>
    </citation>
    <scope>FUNCTION</scope>
    <scope>SUBCELLULAR LOCATION</scope>
    <scope>TISSUE SPECIFICITY</scope>
    <scope>INDUCTION</scope>
</reference>
<reference key="15">
    <citation type="journal article" date="2023" name="Nature">
        <title>Immunoglobulin M perception by FcmuR.</title>
        <authorList>
            <person name="Li Y."/>
            <person name="Shen H."/>
            <person name="Zhang R."/>
            <person name="Ji C."/>
            <person name="Wang Y."/>
            <person name="Su C."/>
            <person name="Xiao J."/>
        </authorList>
    </citation>
    <scope>STRUCTURE BY ELECTRON MICROSCOPY (3.18 ANGSTROMS) OF 18-124 IN COMPLEX WITH IGHM</scope>
    <scope>DISULFIDE BONDS</scope>
    <scope>FUNCTION</scope>
    <scope>SUBUNIT</scope>
    <scope>DOMAIN</scope>
    <scope>MUTAGENESIS OF ARG-45; PHE-67; LYS-69; ASN-109 AND ARG-112</scope>
</reference>
<reference key="16">
    <citation type="journal article" date="2023" name="Nat. Struct. Mol. Biol.">
        <title>Structural basis for Fc receptor recognition of immunoglobulin M.</title>
        <authorList>
            <person name="Chen Q."/>
            <person name="Menon R.P."/>
            <person name="Masino L."/>
            <person name="Tolar P."/>
            <person name="Rosenthal P.B."/>
        </authorList>
    </citation>
    <scope>STRUCTURE BY ELECTRON MICROSCOPY (3.10 ANGSTROMS) OF 18-251 IN COMPLEX WITH IGHM</scope>
    <scope>DISULFIDE BOND</scope>
    <scope>FUNCTION</scope>
    <scope>SUBUNIT</scope>
    <scope>DOMAIN</scope>
</reference>
<sequence>MDFWLWPLYFLPVSGALRILPEVKVEGELGGSVTIKCPLPEMHVRIYLCREMAGSGTCGTVVSTTNFIKAEYKGRVTLKQYPRKNLFLVEVTQLTESDSGVYACGAGMNTDRGKTQKVTLNVHSEYEPSWEEQPMPETPKWFHLPYLFQMPAYASSSKFVTRVTTPAQRGKVPPVHHSSPTTQITHRPRVSRASSVAGDKPRTFLPSTTASKISALEGLLKPQTPSYNHHTRLHRQRALDYGSQSGREGQGFHILIPTILGLFLLALLGLVVKRAVERRKALSRRARRLAVRMRALESSQRPRGSPRPRSQNNIYSACPRRARGADAAGTGEAPVPGPGAPLPPAPLQVSESPWLHAPSLKTSCEYVSLYHQPAAMMEDSDSDDYINVPA</sequence>
<organism>
    <name type="scientific">Homo sapiens</name>
    <name type="common">Human</name>
    <dbReference type="NCBI Taxonomy" id="9606"/>
    <lineage>
        <taxon>Eukaryota</taxon>
        <taxon>Metazoa</taxon>
        <taxon>Chordata</taxon>
        <taxon>Craniata</taxon>
        <taxon>Vertebrata</taxon>
        <taxon>Euteleostomi</taxon>
        <taxon>Mammalia</taxon>
        <taxon>Eutheria</taxon>
        <taxon>Euarchontoglires</taxon>
        <taxon>Primates</taxon>
        <taxon>Haplorrhini</taxon>
        <taxon>Catarrhini</taxon>
        <taxon>Hominidae</taxon>
        <taxon>Homo</taxon>
    </lineage>
</organism>